<protein>
    <recommendedName>
        <fullName>Uncharacterized protein ZK945.6</fullName>
    </recommendedName>
</protein>
<dbReference type="EMBL" id="Z48544">
    <property type="protein sequence ID" value="CAA88439.1"/>
    <property type="molecule type" value="Genomic_DNA"/>
</dbReference>
<dbReference type="PIR" id="T28122">
    <property type="entry name" value="T28122"/>
</dbReference>
<dbReference type="RefSeq" id="NP_001022537.1">
    <property type="nucleotide sequence ID" value="NM_001027366.2"/>
</dbReference>
<dbReference type="BioGRID" id="39893">
    <property type="interactions" value="4"/>
</dbReference>
<dbReference type="FunCoup" id="Q09382">
    <property type="interactions" value="1550"/>
</dbReference>
<dbReference type="IntAct" id="Q09382">
    <property type="interactions" value="4"/>
</dbReference>
<dbReference type="STRING" id="6239.ZK945.6a.1"/>
<dbReference type="PaxDb" id="6239-ZK945.6a"/>
<dbReference type="EnsemblMetazoa" id="ZK945.6a.1">
    <property type="protein sequence ID" value="ZK945.6a.1"/>
    <property type="gene ID" value="WBGene00014168"/>
</dbReference>
<dbReference type="GeneID" id="174574"/>
<dbReference type="KEGG" id="cel:CELE_ZK945.6"/>
<dbReference type="UCSC" id="ZK945.6b">
    <property type="organism name" value="c. elegans"/>
</dbReference>
<dbReference type="AGR" id="WB:WBGene00014168"/>
<dbReference type="CTD" id="174574"/>
<dbReference type="WormBase" id="ZK945.6a">
    <property type="protein sequence ID" value="CE01737"/>
    <property type="gene ID" value="WBGene00014168"/>
</dbReference>
<dbReference type="eggNOG" id="ENOG502THQH">
    <property type="taxonomic scope" value="Eukaryota"/>
</dbReference>
<dbReference type="InParanoid" id="Q09382"/>
<dbReference type="OMA" id="CIAHMES"/>
<dbReference type="OrthoDB" id="5799195at2759"/>
<dbReference type="PRO" id="PR:Q09382"/>
<dbReference type="Proteomes" id="UP000001940">
    <property type="component" value="Chromosome II"/>
</dbReference>
<dbReference type="Bgee" id="WBGene00014168">
    <property type="expression patterns" value="Expressed in adult organism and 1 other cell type or tissue"/>
</dbReference>
<dbReference type="ExpressionAtlas" id="Q09382">
    <property type="expression patterns" value="baseline and differential"/>
</dbReference>
<feature type="chain" id="PRO_0000065552" description="Uncharacterized protein ZK945.6">
    <location>
        <begin position="1"/>
        <end position="216"/>
    </location>
</feature>
<feature type="region of interest" description="Disordered" evidence="1">
    <location>
        <begin position="182"/>
        <end position="204"/>
    </location>
</feature>
<feature type="compositionally biased region" description="Polar residues" evidence="1">
    <location>
        <begin position="182"/>
        <end position="193"/>
    </location>
</feature>
<sequence>MECSQEDVVNDFIALEKIGSEVDINLDGVIKSKECSNTNEADIISNLITAIEESLSCTSVCTAVSLETVAQKLDAYADPSLNTQMSFSTASDLSSMEQDYVKASDDPFDLNHQPSPLQVWRDQGKITGFQMMCDDQKVTVVDSLECLAQSEQHLEPVYFDPRVNLAIPCPPDDFEILEDYGSTSNASVNSDDASTAELGPTSEEFEEWVRKIEQNY</sequence>
<accession>Q09382</accession>
<organism>
    <name type="scientific">Caenorhabditis elegans</name>
    <dbReference type="NCBI Taxonomy" id="6239"/>
    <lineage>
        <taxon>Eukaryota</taxon>
        <taxon>Metazoa</taxon>
        <taxon>Ecdysozoa</taxon>
        <taxon>Nematoda</taxon>
        <taxon>Chromadorea</taxon>
        <taxon>Rhabditida</taxon>
        <taxon>Rhabditina</taxon>
        <taxon>Rhabditomorpha</taxon>
        <taxon>Rhabditoidea</taxon>
        <taxon>Rhabditidae</taxon>
        <taxon>Peloderinae</taxon>
        <taxon>Caenorhabditis</taxon>
    </lineage>
</organism>
<evidence type="ECO:0000256" key="1">
    <source>
        <dbReference type="SAM" id="MobiDB-lite"/>
    </source>
</evidence>
<proteinExistence type="predicted"/>
<keyword id="KW-1185">Reference proteome</keyword>
<name>YS86_CAEEL</name>
<reference key="1">
    <citation type="journal article" date="1998" name="Science">
        <title>Genome sequence of the nematode C. elegans: a platform for investigating biology.</title>
        <authorList>
            <consortium name="The C. elegans sequencing consortium"/>
        </authorList>
    </citation>
    <scope>NUCLEOTIDE SEQUENCE [LARGE SCALE GENOMIC DNA]</scope>
    <source>
        <strain>Bristol N2</strain>
    </source>
</reference>
<gene>
    <name type="ORF">ZK945.6</name>
</gene>